<dbReference type="EC" id="3.-.-.-"/>
<dbReference type="EMBL" id="BX571856">
    <property type="protein sequence ID" value="CAG41273.1"/>
    <property type="molecule type" value="Genomic_DNA"/>
</dbReference>
<dbReference type="RefSeq" id="WP_000044369.1">
    <property type="nucleotide sequence ID" value="NC_002952.2"/>
</dbReference>
<dbReference type="SMR" id="Q6GEM5"/>
<dbReference type="KEGG" id="sar:SAR2294"/>
<dbReference type="HOGENOM" id="CLU_084693_0_0_9"/>
<dbReference type="Proteomes" id="UP000000596">
    <property type="component" value="Chromosome"/>
</dbReference>
<dbReference type="GO" id="GO:0005829">
    <property type="term" value="C:cytosol"/>
    <property type="evidence" value="ECO:0007669"/>
    <property type="project" value="TreeGrafter"/>
</dbReference>
<dbReference type="GO" id="GO:0000287">
    <property type="term" value="F:magnesium ion binding"/>
    <property type="evidence" value="ECO:0007669"/>
    <property type="project" value="TreeGrafter"/>
</dbReference>
<dbReference type="GO" id="GO:0016791">
    <property type="term" value="F:phosphatase activity"/>
    <property type="evidence" value="ECO:0007669"/>
    <property type="project" value="TreeGrafter"/>
</dbReference>
<dbReference type="CDD" id="cd02605">
    <property type="entry name" value="HAD_SPP"/>
    <property type="match status" value="1"/>
</dbReference>
<dbReference type="Gene3D" id="3.40.50.1000">
    <property type="entry name" value="HAD superfamily/HAD-like"/>
    <property type="match status" value="1"/>
</dbReference>
<dbReference type="Gene3D" id="3.30.70.1410">
    <property type="entry name" value="yhjk (haloacid dehalogenase-like hydrolase protein) domain"/>
    <property type="match status" value="1"/>
</dbReference>
<dbReference type="InterPro" id="IPR036412">
    <property type="entry name" value="HAD-like_sf"/>
</dbReference>
<dbReference type="InterPro" id="IPR006379">
    <property type="entry name" value="HAD-SF_hydro_IIB"/>
</dbReference>
<dbReference type="InterPro" id="IPR023214">
    <property type="entry name" value="HAD_sf"/>
</dbReference>
<dbReference type="InterPro" id="IPR006380">
    <property type="entry name" value="SPP-like_dom"/>
</dbReference>
<dbReference type="NCBIfam" id="TIGR01484">
    <property type="entry name" value="HAD-SF-IIB"/>
    <property type="match status" value="1"/>
</dbReference>
<dbReference type="PANTHER" id="PTHR10000:SF57">
    <property type="entry name" value="KANOSAMINE-6-PHOSPHATE PHOSPHATASE"/>
    <property type="match status" value="1"/>
</dbReference>
<dbReference type="PANTHER" id="PTHR10000">
    <property type="entry name" value="PHOSPHOSERINE PHOSPHATASE"/>
    <property type="match status" value="1"/>
</dbReference>
<dbReference type="Pfam" id="PF05116">
    <property type="entry name" value="S6PP"/>
    <property type="match status" value="1"/>
</dbReference>
<dbReference type="SFLD" id="SFLDG01141">
    <property type="entry name" value="C2.B.1:_Sucrose_Phosphatase_Li"/>
    <property type="match status" value="1"/>
</dbReference>
<dbReference type="SFLD" id="SFLDG01140">
    <property type="entry name" value="C2.B:_Phosphomannomutase_and_P"/>
    <property type="match status" value="1"/>
</dbReference>
<dbReference type="SUPFAM" id="SSF56784">
    <property type="entry name" value="HAD-like"/>
    <property type="match status" value="1"/>
</dbReference>
<feature type="chain" id="PRO_0000296087" description="Uncharacterized hydrolase SAR2294">
    <location>
        <begin position="1"/>
        <end position="271"/>
    </location>
</feature>
<gene>
    <name type="ordered locus">SAR2294</name>
</gene>
<sequence>MSKRLLLFDFDETYFKHNTNEEDLSHLREMEKLLEKLTNNNEVITVVLTGSTFQSVMDKMDQVNMTFKPLHIFSDLSSKMFTWNNGEYVESETYKKKVLSEPFLFEDIEDILHHISAQYNVEFIPQRAFEGNETHYNFYFHSTGNHNNDRRILEVLVRYANDQNYTARFSRSNPLAGDPENAYDIDFTPSNAGKLYATQFLMKKYNIPVKSILGFGDSGNDEAYLSYLEHAYLMSNSRDEALKQKFRLTKYPYYQGITLHVKEFVEGKYDY</sequence>
<reference key="1">
    <citation type="journal article" date="2004" name="Proc. Natl. Acad. Sci. U.S.A.">
        <title>Complete genomes of two clinical Staphylococcus aureus strains: evidence for the rapid evolution of virulence and drug resistance.</title>
        <authorList>
            <person name="Holden M.T.G."/>
            <person name="Feil E.J."/>
            <person name="Lindsay J.A."/>
            <person name="Peacock S.J."/>
            <person name="Day N.P.J."/>
            <person name="Enright M.C."/>
            <person name="Foster T.J."/>
            <person name="Moore C.E."/>
            <person name="Hurst L."/>
            <person name="Atkin R."/>
            <person name="Barron A."/>
            <person name="Bason N."/>
            <person name="Bentley S.D."/>
            <person name="Chillingworth C."/>
            <person name="Chillingworth T."/>
            <person name="Churcher C."/>
            <person name="Clark L."/>
            <person name="Corton C."/>
            <person name="Cronin A."/>
            <person name="Doggett J."/>
            <person name="Dowd L."/>
            <person name="Feltwell T."/>
            <person name="Hance Z."/>
            <person name="Harris B."/>
            <person name="Hauser H."/>
            <person name="Holroyd S."/>
            <person name="Jagels K."/>
            <person name="James K.D."/>
            <person name="Lennard N."/>
            <person name="Line A."/>
            <person name="Mayes R."/>
            <person name="Moule S."/>
            <person name="Mungall K."/>
            <person name="Ormond D."/>
            <person name="Quail M.A."/>
            <person name="Rabbinowitsch E."/>
            <person name="Rutherford K.M."/>
            <person name="Sanders M."/>
            <person name="Sharp S."/>
            <person name="Simmonds M."/>
            <person name="Stevens K."/>
            <person name="Whitehead S."/>
            <person name="Barrell B.G."/>
            <person name="Spratt B.G."/>
            <person name="Parkhill J."/>
        </authorList>
    </citation>
    <scope>NUCLEOTIDE SEQUENCE [LARGE SCALE GENOMIC DNA]</scope>
    <source>
        <strain>MRSA252</strain>
    </source>
</reference>
<evidence type="ECO:0000305" key="1"/>
<comment type="similarity">
    <text evidence="1">Belongs to the HAD-like hydrolase superfamily.</text>
</comment>
<protein>
    <recommendedName>
        <fullName>Uncharacterized hydrolase SAR2294</fullName>
        <ecNumber>3.-.-.-</ecNumber>
    </recommendedName>
</protein>
<keyword id="KW-0378">Hydrolase</keyword>
<name>Y2294_STAAR</name>
<organism>
    <name type="scientific">Staphylococcus aureus (strain MRSA252)</name>
    <dbReference type="NCBI Taxonomy" id="282458"/>
    <lineage>
        <taxon>Bacteria</taxon>
        <taxon>Bacillati</taxon>
        <taxon>Bacillota</taxon>
        <taxon>Bacilli</taxon>
        <taxon>Bacillales</taxon>
        <taxon>Staphylococcaceae</taxon>
        <taxon>Staphylococcus</taxon>
    </lineage>
</organism>
<proteinExistence type="inferred from homology"/>
<accession>Q6GEM5</accession>